<accession>Q9UKI9</accession>
<accession>A8K7H8</accession>
<accession>B4DY07</accession>
<accession>F5GWW6</accession>
<accession>Q3MIY3</accession>
<accession>Q9UKR7</accession>
<accession>Q9Y504</accession>
<keyword id="KW-0025">Alternative splicing</keyword>
<keyword id="KW-0238">DNA-binding</keyword>
<keyword id="KW-0371">Homeobox</keyword>
<keyword id="KW-0539">Nucleus</keyword>
<keyword id="KW-1267">Proteomics identification</keyword>
<keyword id="KW-1185">Reference proteome</keyword>
<keyword id="KW-0804">Transcription</keyword>
<keyword id="KW-0805">Transcription regulation</keyword>
<dbReference type="EMBL" id="AF162278">
    <property type="protein sequence ID" value="AAF00199.1"/>
    <property type="molecule type" value="mRNA"/>
</dbReference>
<dbReference type="EMBL" id="AF133895">
    <property type="protein sequence ID" value="AAD55245.1"/>
    <property type="molecule type" value="mRNA"/>
</dbReference>
<dbReference type="EMBL" id="AJ012214">
    <property type="protein sequence ID" value="CAB45383.1"/>
    <property type="molecule type" value="mRNA"/>
</dbReference>
<dbReference type="EMBL" id="AK291993">
    <property type="protein sequence ID" value="BAF84682.1"/>
    <property type="molecule type" value="mRNA"/>
</dbReference>
<dbReference type="EMBL" id="AK302212">
    <property type="protein sequence ID" value="BAG63569.1"/>
    <property type="molecule type" value="mRNA"/>
</dbReference>
<dbReference type="EMBL" id="AP000679">
    <property type="status" value="NOT_ANNOTATED_CDS"/>
    <property type="molecule type" value="Genomic_DNA"/>
</dbReference>
<dbReference type="EMBL" id="AP001150">
    <property type="status" value="NOT_ANNOTATED_CDS"/>
    <property type="molecule type" value="Genomic_DNA"/>
</dbReference>
<dbReference type="EMBL" id="BC101649">
    <property type="protein sequence ID" value="AAI01650.1"/>
    <property type="molecule type" value="mRNA"/>
</dbReference>
<dbReference type="CCDS" id="CCDS58190.1">
    <molecule id="Q9UKI9-2"/>
</dbReference>
<dbReference type="CCDS" id="CCDS8431.1">
    <molecule id="Q9UKI9-1"/>
</dbReference>
<dbReference type="RefSeq" id="NP_001231611.1">
    <molecule id="Q9UKI9-2"/>
    <property type="nucleotide sequence ID" value="NM_001244682.2"/>
</dbReference>
<dbReference type="RefSeq" id="NP_055167.2">
    <molecule id="Q9UKI9-1"/>
    <property type="nucleotide sequence ID" value="NM_014352.4"/>
</dbReference>
<dbReference type="RefSeq" id="XP_011541041.1">
    <molecule id="Q9UKI9-3"/>
    <property type="nucleotide sequence ID" value="XM_011542739.3"/>
</dbReference>
<dbReference type="RefSeq" id="XP_011541042.1">
    <molecule id="Q9UKI9-3"/>
    <property type="nucleotide sequence ID" value="XM_011542740.3"/>
</dbReference>
<dbReference type="SMR" id="Q9UKI9"/>
<dbReference type="BioGRID" id="117361">
    <property type="interactions" value="9"/>
</dbReference>
<dbReference type="FunCoup" id="Q9UKI9">
    <property type="interactions" value="2302"/>
</dbReference>
<dbReference type="IntAct" id="Q9UKI9">
    <property type="interactions" value="3"/>
</dbReference>
<dbReference type="STRING" id="9606.ENSP00000260264"/>
<dbReference type="GlyGen" id="Q9UKI9">
    <property type="glycosylation" value="3 sites, 1 O-linked glycan (2 sites)"/>
</dbReference>
<dbReference type="iPTMnet" id="Q9UKI9"/>
<dbReference type="PhosphoSitePlus" id="Q9UKI9"/>
<dbReference type="BioMuta" id="POU2F3"/>
<dbReference type="DMDM" id="311033416"/>
<dbReference type="jPOST" id="Q9UKI9"/>
<dbReference type="MassIVE" id="Q9UKI9"/>
<dbReference type="PaxDb" id="9606-ENSP00000260264"/>
<dbReference type="PeptideAtlas" id="Q9UKI9"/>
<dbReference type="ProteomicsDB" id="84796">
    <molecule id="Q9UKI9-1"/>
</dbReference>
<dbReference type="ProteomicsDB" id="84797">
    <molecule id="Q9UKI9-2"/>
</dbReference>
<dbReference type="ProteomicsDB" id="84798">
    <molecule id="Q9UKI9-3"/>
</dbReference>
<dbReference type="Pumba" id="Q9UKI9"/>
<dbReference type="Antibodypedia" id="18868">
    <property type="antibodies" value="131 antibodies from 28 providers"/>
</dbReference>
<dbReference type="DNASU" id="25833"/>
<dbReference type="Ensembl" id="ENST00000260264.8">
    <molecule id="Q9UKI9-2"/>
    <property type="protein sequence ID" value="ENSP00000260264.4"/>
    <property type="gene ID" value="ENSG00000137709.10"/>
</dbReference>
<dbReference type="Ensembl" id="ENST00000543440.7">
    <molecule id="Q9UKI9-1"/>
    <property type="protein sequence ID" value="ENSP00000441687.2"/>
    <property type="gene ID" value="ENSG00000137709.10"/>
</dbReference>
<dbReference type="GeneID" id="25833"/>
<dbReference type="KEGG" id="hsa:25833"/>
<dbReference type="MANE-Select" id="ENST00000543440.7">
    <property type="protein sequence ID" value="ENSP00000441687.2"/>
    <property type="RefSeq nucleotide sequence ID" value="NM_014352.4"/>
    <property type="RefSeq protein sequence ID" value="NP_055167.2"/>
</dbReference>
<dbReference type="UCSC" id="uc001pxc.4">
    <molecule id="Q9UKI9-1"/>
    <property type="organism name" value="human"/>
</dbReference>
<dbReference type="AGR" id="HGNC:19864"/>
<dbReference type="CTD" id="25833"/>
<dbReference type="DisGeNET" id="25833"/>
<dbReference type="GeneCards" id="POU2F3"/>
<dbReference type="HGNC" id="HGNC:19864">
    <property type="gene designation" value="POU2F3"/>
</dbReference>
<dbReference type="HPA" id="ENSG00000137709">
    <property type="expression patterns" value="Tissue enriched (skin)"/>
</dbReference>
<dbReference type="MIM" id="607394">
    <property type="type" value="gene"/>
</dbReference>
<dbReference type="neXtProt" id="NX_Q9UKI9"/>
<dbReference type="OpenTargets" id="ENSG00000137709"/>
<dbReference type="PharmGKB" id="PA134963258"/>
<dbReference type="VEuPathDB" id="HostDB:ENSG00000137709"/>
<dbReference type="eggNOG" id="KOG3802">
    <property type="taxonomic scope" value="Eukaryota"/>
</dbReference>
<dbReference type="GeneTree" id="ENSGT00940000157627"/>
<dbReference type="HOGENOM" id="CLU_013065_2_0_1"/>
<dbReference type="InParanoid" id="Q9UKI9"/>
<dbReference type="OMA" id="HTEIKMS"/>
<dbReference type="OrthoDB" id="6358449at2759"/>
<dbReference type="PAN-GO" id="Q9UKI9">
    <property type="GO annotations" value="3 GO annotations based on evolutionary models"/>
</dbReference>
<dbReference type="PhylomeDB" id="Q9UKI9"/>
<dbReference type="TreeFam" id="TF316413"/>
<dbReference type="PathwayCommons" id="Q9UKI9"/>
<dbReference type="SignaLink" id="Q9UKI9"/>
<dbReference type="BioGRID-ORCS" id="25833">
    <property type="hits" value="16 hits in 1169 CRISPR screens"/>
</dbReference>
<dbReference type="ChiTaRS" id="POU2F3">
    <property type="organism name" value="human"/>
</dbReference>
<dbReference type="GeneWiki" id="POU2F3"/>
<dbReference type="GenomeRNAi" id="25833"/>
<dbReference type="Pharos" id="Q9UKI9">
    <property type="development level" value="Tbio"/>
</dbReference>
<dbReference type="PRO" id="PR:Q9UKI9"/>
<dbReference type="Proteomes" id="UP000005640">
    <property type="component" value="Chromosome 11"/>
</dbReference>
<dbReference type="RNAct" id="Q9UKI9">
    <property type="molecule type" value="protein"/>
</dbReference>
<dbReference type="Bgee" id="ENSG00000137709">
    <property type="expression patterns" value="Expressed in skin of abdomen and 125 other cell types or tissues"/>
</dbReference>
<dbReference type="ExpressionAtlas" id="Q9UKI9">
    <property type="expression patterns" value="baseline and differential"/>
</dbReference>
<dbReference type="GO" id="GO:0000785">
    <property type="term" value="C:chromatin"/>
    <property type="evidence" value="ECO:0000247"/>
    <property type="project" value="NTNU_SB"/>
</dbReference>
<dbReference type="GO" id="GO:0005829">
    <property type="term" value="C:cytosol"/>
    <property type="evidence" value="ECO:0000314"/>
    <property type="project" value="HPA"/>
</dbReference>
<dbReference type="GO" id="GO:0016604">
    <property type="term" value="C:nuclear body"/>
    <property type="evidence" value="ECO:0000314"/>
    <property type="project" value="HPA"/>
</dbReference>
<dbReference type="GO" id="GO:0005730">
    <property type="term" value="C:nucleolus"/>
    <property type="evidence" value="ECO:0000314"/>
    <property type="project" value="HPA"/>
</dbReference>
<dbReference type="GO" id="GO:0005654">
    <property type="term" value="C:nucleoplasm"/>
    <property type="evidence" value="ECO:0000314"/>
    <property type="project" value="HPA"/>
</dbReference>
<dbReference type="GO" id="GO:0005634">
    <property type="term" value="C:nucleus"/>
    <property type="evidence" value="ECO:0000314"/>
    <property type="project" value="MGI"/>
</dbReference>
<dbReference type="GO" id="GO:0005886">
    <property type="term" value="C:plasma membrane"/>
    <property type="evidence" value="ECO:0000314"/>
    <property type="project" value="HPA"/>
</dbReference>
<dbReference type="GO" id="GO:0005667">
    <property type="term" value="C:transcription regulator complex"/>
    <property type="evidence" value="ECO:0007669"/>
    <property type="project" value="Ensembl"/>
</dbReference>
<dbReference type="GO" id="GO:0001228">
    <property type="term" value="F:DNA-binding transcription activator activity, RNA polymerase II-specific"/>
    <property type="evidence" value="ECO:0000314"/>
    <property type="project" value="NTNU_SB"/>
</dbReference>
<dbReference type="GO" id="GO:0000981">
    <property type="term" value="F:DNA-binding transcription factor activity, RNA polymerase II-specific"/>
    <property type="evidence" value="ECO:0000247"/>
    <property type="project" value="NTNU_SB"/>
</dbReference>
<dbReference type="GO" id="GO:0042802">
    <property type="term" value="F:identical protein binding"/>
    <property type="evidence" value="ECO:0007669"/>
    <property type="project" value="Ensembl"/>
</dbReference>
<dbReference type="GO" id="GO:0000978">
    <property type="term" value="F:RNA polymerase II cis-regulatory region sequence-specific DNA binding"/>
    <property type="evidence" value="ECO:0000315"/>
    <property type="project" value="NTNU_SB"/>
</dbReference>
<dbReference type="GO" id="GO:0043565">
    <property type="term" value="F:sequence-specific DNA binding"/>
    <property type="evidence" value="ECO:0000314"/>
    <property type="project" value="MGI"/>
</dbReference>
<dbReference type="GO" id="GO:1990837">
    <property type="term" value="F:sequence-specific double-stranded DNA binding"/>
    <property type="evidence" value="ECO:0000314"/>
    <property type="project" value="ARUK-UCL"/>
</dbReference>
<dbReference type="GO" id="GO:0008544">
    <property type="term" value="P:epidermis development"/>
    <property type="evidence" value="ECO:0000304"/>
    <property type="project" value="ProtInc"/>
</dbReference>
<dbReference type="GO" id="GO:0030216">
    <property type="term" value="P:keratinocyte differentiation"/>
    <property type="evidence" value="ECO:0000314"/>
    <property type="project" value="UniProtKB"/>
</dbReference>
<dbReference type="GO" id="GO:0043922">
    <property type="term" value="P:negative regulation by host of viral transcription"/>
    <property type="evidence" value="ECO:0000314"/>
    <property type="project" value="UniProtKB"/>
</dbReference>
<dbReference type="GO" id="GO:0045944">
    <property type="term" value="P:positive regulation of transcription by RNA polymerase II"/>
    <property type="evidence" value="ECO:0000314"/>
    <property type="project" value="NTNU_SB"/>
</dbReference>
<dbReference type="GO" id="GO:0006357">
    <property type="term" value="P:regulation of transcription by RNA polymerase II"/>
    <property type="evidence" value="ECO:0000318"/>
    <property type="project" value="GO_Central"/>
</dbReference>
<dbReference type="GO" id="GO:0042060">
    <property type="term" value="P:wound healing"/>
    <property type="evidence" value="ECO:0007669"/>
    <property type="project" value="Ensembl"/>
</dbReference>
<dbReference type="CDD" id="cd00086">
    <property type="entry name" value="homeodomain"/>
    <property type="match status" value="1"/>
</dbReference>
<dbReference type="FunFam" id="1.10.10.60:FF:000005">
    <property type="entry name" value="POU domain protein"/>
    <property type="match status" value="1"/>
</dbReference>
<dbReference type="FunFam" id="1.10.260.40:FF:000001">
    <property type="entry name" value="POU domain protein"/>
    <property type="match status" value="1"/>
</dbReference>
<dbReference type="Gene3D" id="1.10.10.60">
    <property type="entry name" value="Homeodomain-like"/>
    <property type="match status" value="1"/>
</dbReference>
<dbReference type="Gene3D" id="1.10.260.40">
    <property type="entry name" value="lambda repressor-like DNA-binding domains"/>
    <property type="match status" value="1"/>
</dbReference>
<dbReference type="InterPro" id="IPR001356">
    <property type="entry name" value="HD"/>
</dbReference>
<dbReference type="InterPro" id="IPR017970">
    <property type="entry name" value="Homeobox_CS"/>
</dbReference>
<dbReference type="InterPro" id="IPR009057">
    <property type="entry name" value="Homeodomain-like_sf"/>
</dbReference>
<dbReference type="InterPro" id="IPR010982">
    <property type="entry name" value="Lambda_DNA-bd_dom_sf"/>
</dbReference>
<dbReference type="InterPro" id="IPR013847">
    <property type="entry name" value="POU"/>
</dbReference>
<dbReference type="InterPro" id="IPR000327">
    <property type="entry name" value="POU_dom"/>
</dbReference>
<dbReference type="InterPro" id="IPR050255">
    <property type="entry name" value="POU_domain_TF"/>
</dbReference>
<dbReference type="InterPro" id="IPR000972">
    <property type="entry name" value="TF_octamer"/>
</dbReference>
<dbReference type="PANTHER" id="PTHR11636">
    <property type="entry name" value="POU DOMAIN"/>
    <property type="match status" value="1"/>
</dbReference>
<dbReference type="PANTHER" id="PTHR11636:SF81">
    <property type="entry name" value="POU DOMAIN, CLASS 2, TRANSCRIPTION FACTOR 3"/>
    <property type="match status" value="1"/>
</dbReference>
<dbReference type="Pfam" id="PF00046">
    <property type="entry name" value="Homeodomain"/>
    <property type="match status" value="1"/>
</dbReference>
<dbReference type="Pfam" id="PF00157">
    <property type="entry name" value="Pou"/>
    <property type="match status" value="1"/>
</dbReference>
<dbReference type="PRINTS" id="PR00029">
    <property type="entry name" value="OCTAMER"/>
</dbReference>
<dbReference type="PRINTS" id="PR00028">
    <property type="entry name" value="POUDOMAIN"/>
</dbReference>
<dbReference type="SMART" id="SM00389">
    <property type="entry name" value="HOX"/>
    <property type="match status" value="1"/>
</dbReference>
<dbReference type="SMART" id="SM00352">
    <property type="entry name" value="POU"/>
    <property type="match status" value="1"/>
</dbReference>
<dbReference type="SUPFAM" id="SSF46689">
    <property type="entry name" value="Homeodomain-like"/>
    <property type="match status" value="1"/>
</dbReference>
<dbReference type="SUPFAM" id="SSF47413">
    <property type="entry name" value="lambda repressor-like DNA-binding domains"/>
    <property type="match status" value="1"/>
</dbReference>
<dbReference type="PROSITE" id="PS00027">
    <property type="entry name" value="HOMEOBOX_1"/>
    <property type="match status" value="1"/>
</dbReference>
<dbReference type="PROSITE" id="PS50071">
    <property type="entry name" value="HOMEOBOX_2"/>
    <property type="match status" value="1"/>
</dbReference>
<dbReference type="PROSITE" id="PS00035">
    <property type="entry name" value="POU_1"/>
    <property type="match status" value="1"/>
</dbReference>
<dbReference type="PROSITE" id="PS00465">
    <property type="entry name" value="POU_2"/>
    <property type="match status" value="1"/>
</dbReference>
<dbReference type="PROSITE" id="PS51179">
    <property type="entry name" value="POU_3"/>
    <property type="match status" value="1"/>
</dbReference>
<sequence>MVNLESMHTDIKMSGDVADSTDARSTLSQVEPGNDRNGLDFNRQIKTEDLSDSLQQTLSHRPCHLSQGPAMMSGNQMSGLNASPCQDMASLHPLQQLVLVPGHLQSVSQFLLSQTQPGQQGLQPNLLPFPQQQSGLLLPQTGPGLASQAFGHPGLPGSSLEPHLEASQHLPVPKHLPSSGGADEPSDLEELEKFAKTFKQRRIKLGFTQGDVGLAMGKLYGNDFSQTTISRFEALNLSFKNMCKLKPLLEKWLNDAESSPSDPSVSTPSSYPSLSEVFGRKRKKRTSIETNIRLTLEKRFQDNPKPSSEEISMIAEQLSMEKEVVRVWFCNRRQKEKRINCPVATPIKPPVYNSRLVSPSGSLGPLSVPPVHSTMPGTVTSSCSPGNNSRPSSPGSGLHASSPTASQNNSKAAVNSASSFNSSGSWYRWNHSTYLH</sequence>
<feature type="chain" id="PRO_0000100717" description="POU domain, class 2, transcription factor 3">
    <location>
        <begin position="1"/>
        <end position="436"/>
    </location>
</feature>
<feature type="domain" description="POU-specific" evidence="3">
    <location>
        <begin position="183"/>
        <end position="257"/>
    </location>
</feature>
<feature type="DNA-binding region" description="Homeobox" evidence="2">
    <location>
        <begin position="281"/>
        <end position="340"/>
    </location>
</feature>
<feature type="region of interest" description="Disordered" evidence="4">
    <location>
        <begin position="1"/>
        <end position="40"/>
    </location>
</feature>
<feature type="region of interest" description="Disordered" evidence="4">
    <location>
        <begin position="140"/>
        <end position="186"/>
    </location>
</feature>
<feature type="region of interest" description="Disordered" evidence="4">
    <location>
        <begin position="256"/>
        <end position="278"/>
    </location>
</feature>
<feature type="region of interest" description="Disordered" evidence="4">
    <location>
        <begin position="363"/>
        <end position="421"/>
    </location>
</feature>
<feature type="compositionally biased region" description="Low complexity" evidence="4">
    <location>
        <begin position="258"/>
        <end position="275"/>
    </location>
</feature>
<feature type="compositionally biased region" description="Low complexity" evidence="4">
    <location>
        <begin position="381"/>
        <end position="397"/>
    </location>
</feature>
<feature type="compositionally biased region" description="Low complexity" evidence="4">
    <location>
        <begin position="405"/>
        <end position="421"/>
    </location>
</feature>
<feature type="splice variant" id="VSP_043900" description="In isoform 2." evidence="12">
    <original>MVNLESMHT</original>
    <variation>MESPRTAKGGR</variation>
    <location>
        <begin position="1"/>
        <end position="9"/>
    </location>
</feature>
<feature type="splice variant" id="VSP_043901" description="In isoform 3." evidence="15">
    <original>MVNLESMHT</original>
    <variation>MNDAK</variation>
    <location>
        <begin position="1"/>
        <end position="9"/>
    </location>
</feature>
<feature type="sequence variant" id="VAR_031618" description="In dbSNP:rs7110845." evidence="5 7 10">
    <original>H</original>
    <variation>R</variation>
    <location>
        <position position="152"/>
    </location>
</feature>
<feature type="sequence variant" id="VAR_055906" description="In dbSNP:rs2282537." evidence="7">
    <original>R</original>
    <variation>K</variation>
    <location>
        <position position="390"/>
    </location>
</feature>
<feature type="sequence conflict" description="In Ref. 3; CAB45383." evidence="15" ref="3">
    <original>S</original>
    <variation>P</variation>
    <location>
        <position position="6"/>
    </location>
</feature>
<feature type="sequence conflict" description="In Ref. 2; AAD55245." evidence="15" ref="2">
    <original>N</original>
    <variation>K</variation>
    <location>
        <position position="37"/>
    </location>
</feature>
<feature type="sequence conflict" description="In Ref. 1; AAF00199." evidence="15" ref="1">
    <original>V</original>
    <variation>D</variation>
    <location>
        <position position="351"/>
    </location>
</feature>
<protein>
    <recommendedName>
        <fullName>POU domain, class 2, transcription factor 3</fullName>
    </recommendedName>
    <alternativeName>
        <fullName evidence="13">Octamer-binding protein 11</fullName>
        <shortName evidence="13">Oct-11</shortName>
    </alternativeName>
    <alternativeName>
        <fullName>Octamer-binding transcription factor 11</fullName>
        <shortName>OTF-11</shortName>
    </alternativeName>
    <alternativeName>
        <fullName evidence="14">Transcription factor PLA-1</fullName>
    </alternativeName>
    <alternativeName>
        <fullName>Transcription factor Skn-1</fullName>
    </alternativeName>
</protein>
<gene>
    <name evidence="16" type="primary">POU2F3</name>
    <name type="synonym">OTF11</name>
    <name type="synonym">PLA1</name>
</gene>
<reference key="1">
    <citation type="journal article" date="1999" name="J. Biol. Chem.">
        <title>Characterization of the regulatory domains of the human skn-1a/Epoc-1/Oct-11 POU transcription factor.</title>
        <authorList>
            <person name="Hildesheim J."/>
            <person name="Foster R.A."/>
            <person name="Chamberlin M.E."/>
            <person name="Vogel J.C."/>
        </authorList>
    </citation>
    <scope>NUCLEOTIDE SEQUENCE [MRNA] (ISOFORM 1)</scope>
    <scope>VARIANT ARG-152</scope>
    <scope>FUNCTION</scope>
    <scope>TISSUE SPECIFICITY</scope>
</reference>
<reference key="2">
    <citation type="submission" date="1999-03" db="EMBL/GenBank/DDBJ databases">
        <title>Characterisation of the human transcription factor Oct-11: involvement in the regulation of the SPRR2A gene.</title>
        <authorList>
            <person name="Fischer D.F."/>
            <person name="Hemelaar J."/>
            <person name="Backendorf C."/>
        </authorList>
    </citation>
    <scope>NUCLEOTIDE SEQUENCE [MRNA] (ISOFORM 1)</scope>
    <scope>VARIANT ARG-152</scope>
    <scope>FUNCTION</scope>
</reference>
<reference key="3">
    <citation type="submission" date="1998-10" db="EMBL/GenBank/DDBJ databases">
        <title>PLA-1, a novel human POU transcription factor, regulates the placental lactogen-3 gene expression.</title>
        <authorList>
            <person name="Jimenez-Mateo O."/>
            <person name="Castrillo J.-L."/>
        </authorList>
    </citation>
    <scope>NUCLEOTIDE SEQUENCE [MRNA] (ISOFORM 1)</scope>
    <source>
        <tissue>Placenta</tissue>
    </source>
</reference>
<reference key="4">
    <citation type="journal article" date="2004" name="Nat. Genet.">
        <title>Complete sequencing and characterization of 21,243 full-length human cDNAs.</title>
        <authorList>
            <person name="Ota T."/>
            <person name="Suzuki Y."/>
            <person name="Nishikawa T."/>
            <person name="Otsuki T."/>
            <person name="Sugiyama T."/>
            <person name="Irie R."/>
            <person name="Wakamatsu A."/>
            <person name="Hayashi K."/>
            <person name="Sato H."/>
            <person name="Nagai K."/>
            <person name="Kimura K."/>
            <person name="Makita H."/>
            <person name="Sekine M."/>
            <person name="Obayashi M."/>
            <person name="Nishi T."/>
            <person name="Shibahara T."/>
            <person name="Tanaka T."/>
            <person name="Ishii S."/>
            <person name="Yamamoto J."/>
            <person name="Saito K."/>
            <person name="Kawai Y."/>
            <person name="Isono Y."/>
            <person name="Nakamura Y."/>
            <person name="Nagahari K."/>
            <person name="Murakami K."/>
            <person name="Yasuda T."/>
            <person name="Iwayanagi T."/>
            <person name="Wagatsuma M."/>
            <person name="Shiratori A."/>
            <person name="Sudo H."/>
            <person name="Hosoiri T."/>
            <person name="Kaku Y."/>
            <person name="Kodaira H."/>
            <person name="Kondo H."/>
            <person name="Sugawara M."/>
            <person name="Takahashi M."/>
            <person name="Kanda K."/>
            <person name="Yokoi T."/>
            <person name="Furuya T."/>
            <person name="Kikkawa E."/>
            <person name="Omura Y."/>
            <person name="Abe K."/>
            <person name="Kamihara K."/>
            <person name="Katsuta N."/>
            <person name="Sato K."/>
            <person name="Tanikawa M."/>
            <person name="Yamazaki M."/>
            <person name="Ninomiya K."/>
            <person name="Ishibashi T."/>
            <person name="Yamashita H."/>
            <person name="Murakawa K."/>
            <person name="Fujimori K."/>
            <person name="Tanai H."/>
            <person name="Kimata M."/>
            <person name="Watanabe M."/>
            <person name="Hiraoka S."/>
            <person name="Chiba Y."/>
            <person name="Ishida S."/>
            <person name="Ono Y."/>
            <person name="Takiguchi S."/>
            <person name="Watanabe S."/>
            <person name="Yosida M."/>
            <person name="Hotuta T."/>
            <person name="Kusano J."/>
            <person name="Kanehori K."/>
            <person name="Takahashi-Fujii A."/>
            <person name="Hara H."/>
            <person name="Tanase T.-O."/>
            <person name="Nomura Y."/>
            <person name="Togiya S."/>
            <person name="Komai F."/>
            <person name="Hara R."/>
            <person name="Takeuchi K."/>
            <person name="Arita M."/>
            <person name="Imose N."/>
            <person name="Musashino K."/>
            <person name="Yuuki H."/>
            <person name="Oshima A."/>
            <person name="Sasaki N."/>
            <person name="Aotsuka S."/>
            <person name="Yoshikawa Y."/>
            <person name="Matsunawa H."/>
            <person name="Ichihara T."/>
            <person name="Shiohata N."/>
            <person name="Sano S."/>
            <person name="Moriya S."/>
            <person name="Momiyama H."/>
            <person name="Satoh N."/>
            <person name="Takami S."/>
            <person name="Terashima Y."/>
            <person name="Suzuki O."/>
            <person name="Nakagawa S."/>
            <person name="Senoh A."/>
            <person name="Mizoguchi H."/>
            <person name="Goto Y."/>
            <person name="Shimizu F."/>
            <person name="Wakebe H."/>
            <person name="Hishigaki H."/>
            <person name="Watanabe T."/>
            <person name="Sugiyama A."/>
            <person name="Takemoto M."/>
            <person name="Kawakami B."/>
            <person name="Yamazaki M."/>
            <person name="Watanabe K."/>
            <person name="Kumagai A."/>
            <person name="Itakura S."/>
            <person name="Fukuzumi Y."/>
            <person name="Fujimori Y."/>
            <person name="Komiyama M."/>
            <person name="Tashiro H."/>
            <person name="Tanigami A."/>
            <person name="Fujiwara T."/>
            <person name="Ono T."/>
            <person name="Yamada K."/>
            <person name="Fujii Y."/>
            <person name="Ozaki K."/>
            <person name="Hirao M."/>
            <person name="Ohmori Y."/>
            <person name="Kawabata A."/>
            <person name="Hikiji T."/>
            <person name="Kobatake N."/>
            <person name="Inagaki H."/>
            <person name="Ikema Y."/>
            <person name="Okamoto S."/>
            <person name="Okitani R."/>
            <person name="Kawakami T."/>
            <person name="Noguchi S."/>
            <person name="Itoh T."/>
            <person name="Shigeta K."/>
            <person name="Senba T."/>
            <person name="Matsumura K."/>
            <person name="Nakajima Y."/>
            <person name="Mizuno T."/>
            <person name="Morinaga M."/>
            <person name="Sasaki M."/>
            <person name="Togashi T."/>
            <person name="Oyama M."/>
            <person name="Hata H."/>
            <person name="Watanabe M."/>
            <person name="Komatsu T."/>
            <person name="Mizushima-Sugano J."/>
            <person name="Satoh T."/>
            <person name="Shirai Y."/>
            <person name="Takahashi Y."/>
            <person name="Nakagawa K."/>
            <person name="Okumura K."/>
            <person name="Nagase T."/>
            <person name="Nomura N."/>
            <person name="Kikuchi H."/>
            <person name="Masuho Y."/>
            <person name="Yamashita R."/>
            <person name="Nakai K."/>
            <person name="Yada T."/>
            <person name="Nakamura Y."/>
            <person name="Ohara O."/>
            <person name="Isogai T."/>
            <person name="Sugano S."/>
        </authorList>
    </citation>
    <scope>NUCLEOTIDE SEQUENCE [LARGE SCALE MRNA] (ISOFORMS 1 AND 2)</scope>
    <scope>VARIANTS ARG-152 AND LYS-390</scope>
    <source>
        <tissue>Small intestine</tissue>
        <tissue>Testis</tissue>
    </source>
</reference>
<reference key="5">
    <citation type="journal article" date="2006" name="Nature">
        <title>Human chromosome 11 DNA sequence and analysis including novel gene identification.</title>
        <authorList>
            <person name="Taylor T.D."/>
            <person name="Noguchi H."/>
            <person name="Totoki Y."/>
            <person name="Toyoda A."/>
            <person name="Kuroki Y."/>
            <person name="Dewar K."/>
            <person name="Lloyd C."/>
            <person name="Itoh T."/>
            <person name="Takeda T."/>
            <person name="Kim D.-W."/>
            <person name="She X."/>
            <person name="Barlow K.F."/>
            <person name="Bloom T."/>
            <person name="Bruford E."/>
            <person name="Chang J.L."/>
            <person name="Cuomo C.A."/>
            <person name="Eichler E."/>
            <person name="FitzGerald M.G."/>
            <person name="Jaffe D.B."/>
            <person name="LaButti K."/>
            <person name="Nicol R."/>
            <person name="Park H.-S."/>
            <person name="Seaman C."/>
            <person name="Sougnez C."/>
            <person name="Yang X."/>
            <person name="Zimmer A.R."/>
            <person name="Zody M.C."/>
            <person name="Birren B.W."/>
            <person name="Nusbaum C."/>
            <person name="Fujiyama A."/>
            <person name="Hattori M."/>
            <person name="Rogers J."/>
            <person name="Lander E.S."/>
            <person name="Sakaki Y."/>
        </authorList>
    </citation>
    <scope>NUCLEOTIDE SEQUENCE [LARGE SCALE GENOMIC DNA]</scope>
</reference>
<reference key="6">
    <citation type="journal article" date="2004" name="Genome Res.">
        <title>The status, quality, and expansion of the NIH full-length cDNA project: the Mammalian Gene Collection (MGC).</title>
        <authorList>
            <consortium name="The MGC Project Team"/>
        </authorList>
    </citation>
    <scope>NUCLEOTIDE SEQUENCE [LARGE SCALE MRNA] (ISOFORM 1)</scope>
    <source>
        <tissue>Brain</tissue>
    </source>
</reference>
<reference key="7">
    <citation type="journal article" date="2001" name="J. Cell Sci.">
        <title>The hSkn-1a POU transcription factor enhances epidermal stratification by promoting keratinocyte proliferation.</title>
        <authorList>
            <person name="Hildesheim J."/>
            <person name="Kuehn U."/>
            <person name="Yee C.L."/>
            <person name="Foster R.A."/>
            <person name="Yancey K.B."/>
            <person name="Vogel J.C."/>
        </authorList>
    </citation>
    <scope>FUNCTION</scope>
</reference>
<reference key="8">
    <citation type="journal article" date="2022" name="Nature">
        <title>OCA-T1 and OCA-T2 are coactivators of POU2F3 in the tuft cell lineage.</title>
        <authorList>
            <person name="Wu X.S."/>
            <person name="He X.Y."/>
            <person name="Ipsaro J.J."/>
            <person name="Huang Y.H."/>
            <person name="Preall J.B."/>
            <person name="Ng D."/>
            <person name="Shue Y.T."/>
            <person name="Sage J."/>
            <person name="Egeblad M."/>
            <person name="Joshua-Tor L."/>
            <person name="Vakoc C.R."/>
        </authorList>
    </citation>
    <scope>SUBUNIT</scope>
    <scope>INTERACTION WITH POU2AF2 AND POU2AF3</scope>
    <scope>FUNCTION</scope>
</reference>
<reference key="9">
    <citation type="journal article" date="2022" name="Sci. Adv.">
        <title>POU2AF2/C11orf53 functions as a coactivator of POU2F3 by maintaining chromatin accessibility and enhancer activity.</title>
        <authorList>
            <person name="Szczepanski A.P."/>
            <person name="Tsuboyama N."/>
            <person name="Watanabe J."/>
            <person name="Hashizume R."/>
            <person name="Zhao Z."/>
            <person name="Wang L."/>
        </authorList>
    </citation>
    <scope>INTERACTION WITH POU2AF2</scope>
</reference>
<comment type="function">
    <text evidence="6 8">Transcription factor that binds to the octamer motif (5'-ATTTGCAT-3') and regulates cell type-specific differentiation pathways. Involved in the regulation of keratinocytes differentiation (PubMed:11329378). The POU2F3-POU2AF2/POU2AF3 complex drives the expression of tuft-cell-specific genes, a rare chemosensory cells that coordinate immune and neural functions within mucosal epithelial tissues (PubMed:35576971).</text>
</comment>
<comment type="subunit">
    <text evidence="8 9">Interacts (via the POU domain) with POU2AF1 and POU2AF2 in a DNA-dependent manner; this interaction recruits POU2AF2 to chromatin and increases POU2F3 transactivation activity.</text>
</comment>
<comment type="subcellular location">
    <subcellularLocation>
        <location evidence="1">Nucleus</location>
    </subcellularLocation>
</comment>
<comment type="alternative products">
    <event type="alternative splicing"/>
    <isoform>
        <id>Q9UKI9-1</id>
        <name>1</name>
        <name evidence="11">Skn-1a</name>
        <sequence type="displayed"/>
    </isoform>
    <isoform>
        <id>Q9UKI9-2</id>
        <name>2</name>
        <sequence type="described" ref="VSP_043900"/>
    </isoform>
    <isoform>
        <id>Q9UKI9-3</id>
        <name>3</name>
        <name>Skn-1n</name>
        <sequence type="described" ref="VSP_043901"/>
    </isoform>
</comment>
<comment type="tissue specificity">
    <text evidence="5">Specifically expressed in epidermis and cultured keratinocytes.</text>
</comment>
<comment type="similarity">
    <text evidence="15">Belongs to the POU transcription factor family. Class-2 subfamily.</text>
</comment>
<name>PO2F3_HUMAN</name>
<evidence type="ECO:0000250" key="1">
    <source>
        <dbReference type="UniProtKB" id="P31362"/>
    </source>
</evidence>
<evidence type="ECO:0000255" key="2">
    <source>
        <dbReference type="PROSITE-ProRule" id="PRU00108"/>
    </source>
</evidence>
<evidence type="ECO:0000255" key="3">
    <source>
        <dbReference type="PROSITE-ProRule" id="PRU00530"/>
    </source>
</evidence>
<evidence type="ECO:0000256" key="4">
    <source>
        <dbReference type="SAM" id="MobiDB-lite"/>
    </source>
</evidence>
<evidence type="ECO:0000269" key="5">
    <source>
    </source>
</evidence>
<evidence type="ECO:0000269" key="6">
    <source>
    </source>
</evidence>
<evidence type="ECO:0000269" key="7">
    <source>
    </source>
</evidence>
<evidence type="ECO:0000269" key="8">
    <source>
    </source>
</evidence>
<evidence type="ECO:0000269" key="9">
    <source>
    </source>
</evidence>
<evidence type="ECO:0000269" key="10">
    <source ref="2"/>
</evidence>
<evidence type="ECO:0000303" key="11">
    <source>
    </source>
</evidence>
<evidence type="ECO:0000303" key="12">
    <source>
    </source>
</evidence>
<evidence type="ECO:0000303" key="13">
    <source ref="2"/>
</evidence>
<evidence type="ECO:0000303" key="14">
    <source ref="3"/>
</evidence>
<evidence type="ECO:0000305" key="15"/>
<evidence type="ECO:0000312" key="16">
    <source>
        <dbReference type="HGNC" id="HGNC:19864"/>
    </source>
</evidence>
<proteinExistence type="evidence at protein level"/>
<organism>
    <name type="scientific">Homo sapiens</name>
    <name type="common">Human</name>
    <dbReference type="NCBI Taxonomy" id="9606"/>
    <lineage>
        <taxon>Eukaryota</taxon>
        <taxon>Metazoa</taxon>
        <taxon>Chordata</taxon>
        <taxon>Craniata</taxon>
        <taxon>Vertebrata</taxon>
        <taxon>Euteleostomi</taxon>
        <taxon>Mammalia</taxon>
        <taxon>Eutheria</taxon>
        <taxon>Euarchontoglires</taxon>
        <taxon>Primates</taxon>
        <taxon>Haplorrhini</taxon>
        <taxon>Catarrhini</taxon>
        <taxon>Hominidae</taxon>
        <taxon>Homo</taxon>
    </lineage>
</organism>